<dbReference type="EMBL" id="AL513382">
    <property type="protein sequence ID" value="CAD05909.1"/>
    <property type="molecule type" value="Genomic_DNA"/>
</dbReference>
<dbReference type="EMBL" id="AE014613">
    <property type="protein sequence ID" value="AAO70263.1"/>
    <property type="molecule type" value="Genomic_DNA"/>
</dbReference>
<dbReference type="RefSeq" id="NP_457198.1">
    <property type="nucleotide sequence ID" value="NC_003198.1"/>
</dbReference>
<dbReference type="RefSeq" id="WP_001051100.1">
    <property type="nucleotide sequence ID" value="NZ_WSUR01000031.1"/>
</dbReference>
<dbReference type="SMR" id="P0A1S5"/>
<dbReference type="STRING" id="220341.gene:17586814"/>
<dbReference type="KEGG" id="stt:t2695"/>
<dbReference type="KEGG" id="sty:STY2920"/>
<dbReference type="PATRIC" id="fig|220341.7.peg.2973"/>
<dbReference type="eggNOG" id="COG2916">
    <property type="taxonomic scope" value="Bacteria"/>
</dbReference>
<dbReference type="HOGENOM" id="CLU_117503_0_0_6"/>
<dbReference type="OMA" id="NTWLELM"/>
<dbReference type="OrthoDB" id="6088948at2"/>
<dbReference type="Proteomes" id="UP000000541">
    <property type="component" value="Chromosome"/>
</dbReference>
<dbReference type="Proteomes" id="UP000002670">
    <property type="component" value="Chromosome"/>
</dbReference>
<dbReference type="GO" id="GO:0005829">
    <property type="term" value="C:cytosol"/>
    <property type="evidence" value="ECO:0007669"/>
    <property type="project" value="TreeGrafter"/>
</dbReference>
<dbReference type="GO" id="GO:0009295">
    <property type="term" value="C:nucleoid"/>
    <property type="evidence" value="ECO:0007669"/>
    <property type="project" value="UniProtKB-SubCell"/>
</dbReference>
<dbReference type="GO" id="GO:0032993">
    <property type="term" value="C:protein-DNA complex"/>
    <property type="evidence" value="ECO:0007669"/>
    <property type="project" value="TreeGrafter"/>
</dbReference>
<dbReference type="GO" id="GO:0003681">
    <property type="term" value="F:bent DNA binding"/>
    <property type="evidence" value="ECO:0007669"/>
    <property type="project" value="TreeGrafter"/>
</dbReference>
<dbReference type="GO" id="GO:0001217">
    <property type="term" value="F:DNA-binding transcription repressor activity"/>
    <property type="evidence" value="ECO:0007669"/>
    <property type="project" value="TreeGrafter"/>
</dbReference>
<dbReference type="GO" id="GO:0003680">
    <property type="term" value="F:minor groove of adenine-thymine-rich DNA binding"/>
    <property type="evidence" value="ECO:0007669"/>
    <property type="project" value="TreeGrafter"/>
</dbReference>
<dbReference type="GO" id="GO:0046983">
    <property type="term" value="F:protein dimerization activity"/>
    <property type="evidence" value="ECO:0007669"/>
    <property type="project" value="InterPro"/>
</dbReference>
<dbReference type="GO" id="GO:0030527">
    <property type="term" value="F:structural constituent of chromatin"/>
    <property type="evidence" value="ECO:0007669"/>
    <property type="project" value="InterPro"/>
</dbReference>
<dbReference type="GO" id="GO:0000976">
    <property type="term" value="F:transcription cis-regulatory region binding"/>
    <property type="evidence" value="ECO:0007669"/>
    <property type="project" value="TreeGrafter"/>
</dbReference>
<dbReference type="FunFam" id="1.10.287.1050:FF:000001">
    <property type="entry name" value="DNA-binding protein"/>
    <property type="match status" value="1"/>
</dbReference>
<dbReference type="FunFam" id="4.10.430.10:FF:000001">
    <property type="entry name" value="DNA-binding protein"/>
    <property type="match status" value="1"/>
</dbReference>
<dbReference type="Gene3D" id="1.10.287.1050">
    <property type="entry name" value="H-NS histone-like proteins"/>
    <property type="match status" value="1"/>
</dbReference>
<dbReference type="Gene3D" id="4.10.430.10">
    <property type="entry name" value="Histone-like protein H-NS, C-terminal domain"/>
    <property type="match status" value="1"/>
</dbReference>
<dbReference type="InterPro" id="IPR054180">
    <property type="entry name" value="H-NS-like_N"/>
</dbReference>
<dbReference type="InterPro" id="IPR027444">
    <property type="entry name" value="H-NS_C_dom"/>
</dbReference>
<dbReference type="InterPro" id="IPR037150">
    <property type="entry name" value="H-NS_C_dom_sf"/>
</dbReference>
<dbReference type="InterPro" id="IPR001801">
    <property type="entry name" value="Histone_HNS"/>
</dbReference>
<dbReference type="InterPro" id="IPR027454">
    <property type="entry name" value="Histone_HNS_N"/>
</dbReference>
<dbReference type="NCBIfam" id="NF007656">
    <property type="entry name" value="PRK10328.1"/>
    <property type="match status" value="1"/>
</dbReference>
<dbReference type="PANTHER" id="PTHR38097">
    <property type="match status" value="1"/>
</dbReference>
<dbReference type="PANTHER" id="PTHR38097:SF2">
    <property type="entry name" value="DNA-BINDING PROTEIN STPA"/>
    <property type="match status" value="1"/>
</dbReference>
<dbReference type="Pfam" id="PF00816">
    <property type="entry name" value="Histone_HNS"/>
    <property type="match status" value="1"/>
</dbReference>
<dbReference type="Pfam" id="PF22470">
    <property type="entry name" value="Histone_HNS_N"/>
    <property type="match status" value="1"/>
</dbReference>
<dbReference type="PIRSF" id="PIRSF002096">
    <property type="entry name" value="HnS"/>
    <property type="match status" value="1"/>
</dbReference>
<dbReference type="SMART" id="SM00528">
    <property type="entry name" value="HNS"/>
    <property type="match status" value="1"/>
</dbReference>
<dbReference type="SUPFAM" id="SSF81273">
    <property type="entry name" value="H-NS histone-like proteins"/>
    <property type="match status" value="2"/>
</dbReference>
<accession>P0A1S5</accession>
<accession>O33800</accession>
<feature type="chain" id="PRO_0000168515" description="DNA-binding protein StpA">
    <location>
        <begin position="1"/>
        <end position="133"/>
    </location>
</feature>
<feature type="DNA-binding region" evidence="1">
    <location>
        <begin position="111"/>
        <end position="116"/>
    </location>
</feature>
<feature type="region of interest" description="Disordered" evidence="3">
    <location>
        <begin position="81"/>
        <end position="115"/>
    </location>
</feature>
<feature type="compositionally biased region" description="Basic residues" evidence="3">
    <location>
        <begin position="85"/>
        <end position="95"/>
    </location>
</feature>
<organism>
    <name type="scientific">Salmonella typhi</name>
    <dbReference type="NCBI Taxonomy" id="90370"/>
    <lineage>
        <taxon>Bacteria</taxon>
        <taxon>Pseudomonadati</taxon>
        <taxon>Pseudomonadota</taxon>
        <taxon>Gammaproteobacteria</taxon>
        <taxon>Enterobacterales</taxon>
        <taxon>Enterobacteriaceae</taxon>
        <taxon>Salmonella</taxon>
    </lineage>
</organism>
<proteinExistence type="inferred from homology"/>
<sequence length="133" mass="15488">MNLMLQNLNNIRTLRAMAREFSIDVLEEMLEKFRVVTKERREEEELQQRQLAEKQEKINAFLELMKADGINPEELFAMDSAMPRSAKKRQPRPAKYRFTDFNGEEKTWTGQGRTPKPIAQALAAGKSLDDFLI</sequence>
<gene>
    <name type="primary">stpA</name>
    <name type="ordered locus">STY2920</name>
    <name type="ordered locus">t2695</name>
</gene>
<comment type="function">
    <text evidence="2">A DNA-binding protein that acts in a fashion similar to H-NS, repressing gene transcription. A subset of H-NS/StpA-regulated genes require auxillary proteins for repression; these auxillary proteins (Hha and other similar proteins) may also modulate oligomerization of the H-NS/StpA complex (By similarity).</text>
</comment>
<comment type="subunit">
    <text evidence="2">Forms homodimers, can interact with H-NS.</text>
</comment>
<comment type="subcellular location">
    <subcellularLocation>
        <location evidence="2">Cytoplasm</location>
        <location evidence="2">Nucleoid</location>
    </subcellularLocation>
</comment>
<comment type="similarity">
    <text evidence="4">Belongs to the histone-like protein H-NS family.</text>
</comment>
<evidence type="ECO:0000250" key="1">
    <source>
        <dbReference type="UniProtKB" id="P0A1S2"/>
    </source>
</evidence>
<evidence type="ECO:0000250" key="2">
    <source>
        <dbReference type="UniProtKB" id="P0ACG1"/>
    </source>
</evidence>
<evidence type="ECO:0000256" key="3">
    <source>
        <dbReference type="SAM" id="MobiDB-lite"/>
    </source>
</evidence>
<evidence type="ECO:0000305" key="4"/>
<keyword id="KW-0963">Cytoplasm</keyword>
<keyword id="KW-0238">DNA-binding</keyword>
<protein>
    <recommendedName>
        <fullName>DNA-binding protein StpA</fullName>
    </recommendedName>
    <alternativeName>
        <fullName>H-NS homolog StpA</fullName>
    </alternativeName>
</protein>
<reference key="1">
    <citation type="journal article" date="2001" name="Nature">
        <title>Complete genome sequence of a multiple drug resistant Salmonella enterica serovar Typhi CT18.</title>
        <authorList>
            <person name="Parkhill J."/>
            <person name="Dougan G."/>
            <person name="James K.D."/>
            <person name="Thomson N.R."/>
            <person name="Pickard D."/>
            <person name="Wain J."/>
            <person name="Churcher C.M."/>
            <person name="Mungall K.L."/>
            <person name="Bentley S.D."/>
            <person name="Holden M.T.G."/>
            <person name="Sebaihia M."/>
            <person name="Baker S."/>
            <person name="Basham D."/>
            <person name="Brooks K."/>
            <person name="Chillingworth T."/>
            <person name="Connerton P."/>
            <person name="Cronin A."/>
            <person name="Davis P."/>
            <person name="Davies R.M."/>
            <person name="Dowd L."/>
            <person name="White N."/>
            <person name="Farrar J."/>
            <person name="Feltwell T."/>
            <person name="Hamlin N."/>
            <person name="Haque A."/>
            <person name="Hien T.T."/>
            <person name="Holroyd S."/>
            <person name="Jagels K."/>
            <person name="Krogh A."/>
            <person name="Larsen T.S."/>
            <person name="Leather S."/>
            <person name="Moule S."/>
            <person name="O'Gaora P."/>
            <person name="Parry C."/>
            <person name="Quail M.A."/>
            <person name="Rutherford K.M."/>
            <person name="Simmonds M."/>
            <person name="Skelton J."/>
            <person name="Stevens K."/>
            <person name="Whitehead S."/>
            <person name="Barrell B.G."/>
        </authorList>
    </citation>
    <scope>NUCLEOTIDE SEQUENCE [LARGE SCALE GENOMIC DNA]</scope>
    <source>
        <strain>CT18</strain>
    </source>
</reference>
<reference key="2">
    <citation type="journal article" date="2003" name="J. Bacteriol.">
        <title>Comparative genomics of Salmonella enterica serovar Typhi strains Ty2 and CT18.</title>
        <authorList>
            <person name="Deng W."/>
            <person name="Liou S.-R."/>
            <person name="Plunkett G. III"/>
            <person name="Mayhew G.F."/>
            <person name="Rose D.J."/>
            <person name="Burland V."/>
            <person name="Kodoyianni V."/>
            <person name="Schwartz D.C."/>
            <person name="Blattner F.R."/>
        </authorList>
    </citation>
    <scope>NUCLEOTIDE SEQUENCE [LARGE SCALE GENOMIC DNA]</scope>
    <source>
        <strain>ATCC 700931 / Ty2</strain>
    </source>
</reference>
<name>STPA_SALTI</name>